<dbReference type="EMBL" id="U32375">
    <property type="protein sequence ID" value="AAB61626.1"/>
    <property type="molecule type" value="Genomic_DNA"/>
</dbReference>
<dbReference type="SMR" id="P70790"/>
<dbReference type="GO" id="GO:0003677">
    <property type="term" value="F:DNA binding"/>
    <property type="evidence" value="ECO:0007669"/>
    <property type="project" value="UniProtKB-KW"/>
</dbReference>
<dbReference type="GO" id="GO:0003700">
    <property type="term" value="F:DNA-binding transcription factor activity"/>
    <property type="evidence" value="ECO:0007669"/>
    <property type="project" value="InterPro"/>
</dbReference>
<dbReference type="CDD" id="cd07377">
    <property type="entry name" value="WHTH_GntR"/>
    <property type="match status" value="1"/>
</dbReference>
<dbReference type="Gene3D" id="1.20.120.530">
    <property type="entry name" value="GntR ligand-binding domain-like"/>
    <property type="match status" value="1"/>
</dbReference>
<dbReference type="Gene3D" id="1.10.10.10">
    <property type="entry name" value="Winged helix-like DNA-binding domain superfamily/Winged helix DNA-binding domain"/>
    <property type="match status" value="1"/>
</dbReference>
<dbReference type="InterPro" id="IPR011711">
    <property type="entry name" value="GntR_C"/>
</dbReference>
<dbReference type="InterPro" id="IPR008920">
    <property type="entry name" value="TF_FadR/GntR_C"/>
</dbReference>
<dbReference type="InterPro" id="IPR000524">
    <property type="entry name" value="Tscrpt_reg_HTH_GntR"/>
</dbReference>
<dbReference type="InterPro" id="IPR036388">
    <property type="entry name" value="WH-like_DNA-bd_sf"/>
</dbReference>
<dbReference type="InterPro" id="IPR036390">
    <property type="entry name" value="WH_DNA-bd_sf"/>
</dbReference>
<dbReference type="PANTHER" id="PTHR43537:SF24">
    <property type="entry name" value="GLUCONATE OPERON TRANSCRIPTIONAL REPRESSOR"/>
    <property type="match status" value="1"/>
</dbReference>
<dbReference type="PANTHER" id="PTHR43537">
    <property type="entry name" value="TRANSCRIPTIONAL REGULATOR, GNTR FAMILY"/>
    <property type="match status" value="1"/>
</dbReference>
<dbReference type="Pfam" id="PF07729">
    <property type="entry name" value="FCD"/>
    <property type="match status" value="1"/>
</dbReference>
<dbReference type="Pfam" id="PF00392">
    <property type="entry name" value="GntR"/>
    <property type="match status" value="1"/>
</dbReference>
<dbReference type="PRINTS" id="PR00035">
    <property type="entry name" value="HTHGNTR"/>
</dbReference>
<dbReference type="SMART" id="SM00345">
    <property type="entry name" value="HTH_GNTR"/>
    <property type="match status" value="1"/>
</dbReference>
<dbReference type="SUPFAM" id="SSF48008">
    <property type="entry name" value="GntR ligand-binding domain-like"/>
    <property type="match status" value="1"/>
</dbReference>
<dbReference type="SUPFAM" id="SSF46785">
    <property type="entry name" value="Winged helix' DNA-binding domain"/>
    <property type="match status" value="1"/>
</dbReference>
<dbReference type="PROSITE" id="PS50949">
    <property type="entry name" value="HTH_GNTR"/>
    <property type="match status" value="1"/>
</dbReference>
<accession>P70790</accession>
<sequence length="171" mass="18238">MVKPGQILRAAVRETAEPLTELAGDSVSSAGRVSAAYHAIRNAIRTNVFPPGYQAAEIEIARQLGMSRTPVHEAMARLQEDGLVRILPKKGIIICALSPADIEEIYEVTIALEGAAASRLAMIDAPVKAEVVALLRDATEAMVAALERNDLPGWAAADERFHETLVACAAQ</sequence>
<geneLocation type="plasmid">
    <name>pTrAB3</name>
</geneLocation>
<feature type="chain" id="PRO_0000050701" description="Uncharacterized HTH-type transcriptional regulator in the TAR-I ttuE-ttuC' intergenic region">
    <location>
        <begin position="1"/>
        <end position="171"/>
    </location>
</feature>
<feature type="domain" description="HTH gntR-type" evidence="1">
    <location>
        <begin position="30"/>
        <end position="97"/>
    </location>
</feature>
<feature type="DNA-binding region" description="H-T-H motif" evidence="1">
    <location>
        <begin position="57"/>
        <end position="76"/>
    </location>
</feature>
<protein>
    <recommendedName>
        <fullName>Uncharacterized HTH-type transcriptional regulator in the TAR-I ttuE-ttuC' intergenic region</fullName>
    </recommendedName>
    <alternativeName>
        <fullName>ORFX</fullName>
    </alternativeName>
</protein>
<reference key="1">
    <citation type="journal article" date="1996" name="Mol. Plant Microbe Interact.">
        <title>Characterization and distribution of tartrate utilization genes in the grapevine pathogen Agrobacterium vitis.</title>
        <authorList>
            <person name="Salomone J.-Y."/>
            <person name="Crouzet P."/>
            <person name="de Ruffray P."/>
            <person name="Otten L."/>
        </authorList>
    </citation>
    <scope>NUCLEOTIDE SEQUENCE [GENOMIC DNA]</scope>
    <source>
        <strain>AB3</strain>
    </source>
</reference>
<name>YTUX_AGRVI</name>
<proteinExistence type="predicted"/>
<organism>
    <name type="scientific">Agrobacterium vitis</name>
    <name type="common">Rhizobium vitis</name>
    <dbReference type="NCBI Taxonomy" id="373"/>
    <lineage>
        <taxon>Bacteria</taxon>
        <taxon>Pseudomonadati</taxon>
        <taxon>Pseudomonadota</taxon>
        <taxon>Alphaproteobacteria</taxon>
        <taxon>Hyphomicrobiales</taxon>
        <taxon>Rhizobiaceae</taxon>
        <taxon>Rhizobium/Agrobacterium group</taxon>
        <taxon>Agrobacterium</taxon>
    </lineage>
</organism>
<keyword id="KW-0238">DNA-binding</keyword>
<keyword id="KW-0614">Plasmid</keyword>
<keyword id="KW-0804">Transcription</keyword>
<keyword id="KW-0805">Transcription regulation</keyword>
<evidence type="ECO:0000255" key="1">
    <source>
        <dbReference type="PROSITE-ProRule" id="PRU00307"/>
    </source>
</evidence>